<dbReference type="EC" id="3.1.3.18" evidence="1"/>
<dbReference type="EMBL" id="CP000057">
    <property type="protein sequence ID" value="AAX87617.1"/>
    <property type="molecule type" value="Genomic_DNA"/>
</dbReference>
<dbReference type="RefSeq" id="WP_005657931.1">
    <property type="nucleotide sequence ID" value="NC_007146.2"/>
</dbReference>
<dbReference type="SMR" id="Q4QMY0"/>
<dbReference type="KEGG" id="hit:NTHI0697"/>
<dbReference type="HOGENOM" id="CLU_045011_19_1_6"/>
<dbReference type="UniPathway" id="UPA00865">
    <property type="reaction ID" value="UER00834"/>
</dbReference>
<dbReference type="Proteomes" id="UP000002525">
    <property type="component" value="Chromosome"/>
</dbReference>
<dbReference type="GO" id="GO:0005829">
    <property type="term" value="C:cytosol"/>
    <property type="evidence" value="ECO:0007669"/>
    <property type="project" value="TreeGrafter"/>
</dbReference>
<dbReference type="GO" id="GO:0046872">
    <property type="term" value="F:metal ion binding"/>
    <property type="evidence" value="ECO:0007669"/>
    <property type="project" value="UniProtKB-KW"/>
</dbReference>
<dbReference type="GO" id="GO:0008967">
    <property type="term" value="F:phosphoglycolate phosphatase activity"/>
    <property type="evidence" value="ECO:0007669"/>
    <property type="project" value="UniProtKB-UniRule"/>
</dbReference>
<dbReference type="GO" id="GO:0005975">
    <property type="term" value="P:carbohydrate metabolic process"/>
    <property type="evidence" value="ECO:0007669"/>
    <property type="project" value="InterPro"/>
</dbReference>
<dbReference type="GO" id="GO:0006281">
    <property type="term" value="P:DNA repair"/>
    <property type="evidence" value="ECO:0007669"/>
    <property type="project" value="TreeGrafter"/>
</dbReference>
<dbReference type="GO" id="GO:0046295">
    <property type="term" value="P:glycolate biosynthetic process"/>
    <property type="evidence" value="ECO:0007669"/>
    <property type="project" value="UniProtKB-UniRule"/>
</dbReference>
<dbReference type="CDD" id="cd16417">
    <property type="entry name" value="HAD_PGPase"/>
    <property type="match status" value="1"/>
</dbReference>
<dbReference type="FunFam" id="3.40.50.1000:FF:000022">
    <property type="entry name" value="Phosphoglycolate phosphatase"/>
    <property type="match status" value="1"/>
</dbReference>
<dbReference type="Gene3D" id="3.40.50.1000">
    <property type="entry name" value="HAD superfamily/HAD-like"/>
    <property type="match status" value="1"/>
</dbReference>
<dbReference type="Gene3D" id="1.10.150.240">
    <property type="entry name" value="Putative phosphatase, domain 2"/>
    <property type="match status" value="1"/>
</dbReference>
<dbReference type="HAMAP" id="MF_00495">
    <property type="entry name" value="GPH_hydrolase_bact"/>
    <property type="match status" value="1"/>
</dbReference>
<dbReference type="InterPro" id="IPR050155">
    <property type="entry name" value="HAD-like_hydrolase_sf"/>
</dbReference>
<dbReference type="InterPro" id="IPR036412">
    <property type="entry name" value="HAD-like_sf"/>
</dbReference>
<dbReference type="InterPro" id="IPR006439">
    <property type="entry name" value="HAD-SF_hydro_IA"/>
</dbReference>
<dbReference type="InterPro" id="IPR041492">
    <property type="entry name" value="HAD_2"/>
</dbReference>
<dbReference type="InterPro" id="IPR023214">
    <property type="entry name" value="HAD_sf"/>
</dbReference>
<dbReference type="InterPro" id="IPR023198">
    <property type="entry name" value="PGP-like_dom2"/>
</dbReference>
<dbReference type="InterPro" id="IPR037512">
    <property type="entry name" value="PGPase_prok"/>
</dbReference>
<dbReference type="NCBIfam" id="TIGR01549">
    <property type="entry name" value="HAD-SF-IA-v1"/>
    <property type="match status" value="1"/>
</dbReference>
<dbReference type="NCBIfam" id="TIGR01509">
    <property type="entry name" value="HAD-SF-IA-v3"/>
    <property type="match status" value="1"/>
</dbReference>
<dbReference type="NCBIfam" id="TIGR01449">
    <property type="entry name" value="PGP_bact"/>
    <property type="match status" value="1"/>
</dbReference>
<dbReference type="NCBIfam" id="NF009695">
    <property type="entry name" value="PRK13222.1-2"/>
    <property type="match status" value="1"/>
</dbReference>
<dbReference type="PANTHER" id="PTHR43434">
    <property type="entry name" value="PHOSPHOGLYCOLATE PHOSPHATASE"/>
    <property type="match status" value="1"/>
</dbReference>
<dbReference type="PANTHER" id="PTHR43434:SF1">
    <property type="entry name" value="PHOSPHOGLYCOLATE PHOSPHATASE"/>
    <property type="match status" value="1"/>
</dbReference>
<dbReference type="Pfam" id="PF13419">
    <property type="entry name" value="HAD_2"/>
    <property type="match status" value="1"/>
</dbReference>
<dbReference type="PRINTS" id="PR00413">
    <property type="entry name" value="HADHALOGNASE"/>
</dbReference>
<dbReference type="SFLD" id="SFLDG01135">
    <property type="entry name" value="C1.5.6:_HAD__Beta-PGM__Phospha"/>
    <property type="match status" value="1"/>
</dbReference>
<dbReference type="SFLD" id="SFLDG01129">
    <property type="entry name" value="C1.5:_HAD__Beta-PGM__Phosphata"/>
    <property type="match status" value="1"/>
</dbReference>
<dbReference type="SUPFAM" id="SSF56784">
    <property type="entry name" value="HAD-like"/>
    <property type="match status" value="1"/>
</dbReference>
<gene>
    <name type="ordered locus">NTHI0697</name>
</gene>
<comment type="function">
    <text evidence="1">Specifically catalyzes the dephosphorylation of 2-phosphoglycolate. Is involved in the dissimilation of the intracellular 2-phosphoglycolate formed during the DNA repair of 3'-phosphoglycolate ends, a major class of DNA lesions induced by oxidative stress.</text>
</comment>
<comment type="catalytic activity">
    <reaction evidence="1">
        <text>2-phosphoglycolate + H2O = glycolate + phosphate</text>
        <dbReference type="Rhea" id="RHEA:14369"/>
        <dbReference type="ChEBI" id="CHEBI:15377"/>
        <dbReference type="ChEBI" id="CHEBI:29805"/>
        <dbReference type="ChEBI" id="CHEBI:43474"/>
        <dbReference type="ChEBI" id="CHEBI:58033"/>
        <dbReference type="EC" id="3.1.3.18"/>
    </reaction>
</comment>
<comment type="cofactor">
    <cofactor evidence="1">
        <name>Mg(2+)</name>
        <dbReference type="ChEBI" id="CHEBI:18420"/>
    </cofactor>
</comment>
<comment type="pathway">
    <text evidence="1">Organic acid metabolism; glycolate biosynthesis; glycolate from 2-phosphoglycolate: step 1/1.</text>
</comment>
<comment type="similarity">
    <text evidence="1">Belongs to the HAD-like hydrolase superfamily. CbbY/CbbZ/Gph/YieH family.</text>
</comment>
<feature type="chain" id="PRO_0000238159" description="Phosphoglycolate phosphatase">
    <location>
        <begin position="1"/>
        <end position="224"/>
    </location>
</feature>
<feature type="active site" description="Nucleophile" evidence="1">
    <location>
        <position position="11"/>
    </location>
</feature>
<feature type="binding site" evidence="1">
    <location>
        <position position="11"/>
    </location>
    <ligand>
        <name>Mg(2+)</name>
        <dbReference type="ChEBI" id="CHEBI:18420"/>
    </ligand>
</feature>
<feature type="binding site" evidence="1">
    <location>
        <position position="13"/>
    </location>
    <ligand>
        <name>Mg(2+)</name>
        <dbReference type="ChEBI" id="CHEBI:18420"/>
    </ligand>
</feature>
<feature type="binding site" evidence="1">
    <location>
        <position position="177"/>
    </location>
    <ligand>
        <name>Mg(2+)</name>
        <dbReference type="ChEBI" id="CHEBI:18420"/>
    </ligand>
</feature>
<proteinExistence type="inferred from homology"/>
<evidence type="ECO:0000255" key="1">
    <source>
        <dbReference type="HAMAP-Rule" id="MF_00495"/>
    </source>
</evidence>
<accession>Q4QMY0</accession>
<reference key="1">
    <citation type="journal article" date="2005" name="J. Bacteriol.">
        <title>Genomic sequence of an otitis media isolate of nontypeable Haemophilus influenzae: comparative study with H. influenzae serotype d, strain KW20.</title>
        <authorList>
            <person name="Harrison A."/>
            <person name="Dyer D.W."/>
            <person name="Gillaspy A."/>
            <person name="Ray W.C."/>
            <person name="Mungur R."/>
            <person name="Carson M.B."/>
            <person name="Zhong H."/>
            <person name="Gipson J."/>
            <person name="Gipson M."/>
            <person name="Johnson L.S."/>
            <person name="Lewis L."/>
            <person name="Bakaletz L.O."/>
            <person name="Munson R.S. Jr."/>
        </authorList>
    </citation>
    <scope>NUCLEOTIDE SEQUENCE [LARGE SCALE GENOMIC DNA]</scope>
    <source>
        <strain>86-028NP</strain>
    </source>
</reference>
<protein>
    <recommendedName>
        <fullName evidence="1">Phosphoglycolate phosphatase</fullName>
        <shortName evidence="1">PGP</shortName>
        <shortName evidence="1">PGPase</shortName>
        <ecNumber evidence="1">3.1.3.18</ecNumber>
    </recommendedName>
</protein>
<sequence length="224" mass="24734">MNTQFKLIGFDLDGTLVNSLPDLALSVNSALAEFNLPKAPEELVLTWIGNGAPVLIARALDWAKKQTGKVLTETEVKQVTERFNFYYGENLCNVSRLYPNVKETLETLKEKGYVLAVVTNKPTRHVQPVLAAFGIDHLFSEMLGGQSLPAIKPHPAPLYYLCGKFGFEPRQVLFVGDSKNDIIAAHAAGCAVVGLTYGYNYNIPITESNPDWVFDDFAQLLTIL</sequence>
<keyword id="KW-0119">Carbohydrate metabolism</keyword>
<keyword id="KW-0378">Hydrolase</keyword>
<keyword id="KW-0460">Magnesium</keyword>
<keyword id="KW-0479">Metal-binding</keyword>
<name>GPH_HAEI8</name>
<organism>
    <name type="scientific">Haemophilus influenzae (strain 86-028NP)</name>
    <dbReference type="NCBI Taxonomy" id="281310"/>
    <lineage>
        <taxon>Bacteria</taxon>
        <taxon>Pseudomonadati</taxon>
        <taxon>Pseudomonadota</taxon>
        <taxon>Gammaproteobacteria</taxon>
        <taxon>Pasteurellales</taxon>
        <taxon>Pasteurellaceae</taxon>
        <taxon>Haemophilus</taxon>
    </lineage>
</organism>